<protein>
    <recommendedName>
        <fullName>Peroxide operon regulator</fullName>
    </recommendedName>
</protein>
<reference key="1">
    <citation type="journal article" date="1997" name="Microbiology">
        <title>The Bacillus subtilis 168 chromosome from sspE to katA.</title>
        <authorList>
            <person name="Cummings N.J."/>
            <person name="Connerton I.F."/>
        </authorList>
    </citation>
    <scope>NUCLEOTIDE SEQUENCE [GENOMIC DNA]</scope>
    <source>
        <strain>168</strain>
    </source>
</reference>
<reference key="2">
    <citation type="journal article" date="1997" name="Nature">
        <title>The complete genome sequence of the Gram-positive bacterium Bacillus subtilis.</title>
        <authorList>
            <person name="Kunst F."/>
            <person name="Ogasawara N."/>
            <person name="Moszer I."/>
            <person name="Albertini A.M."/>
            <person name="Alloni G."/>
            <person name="Azevedo V."/>
            <person name="Bertero M.G."/>
            <person name="Bessieres P."/>
            <person name="Bolotin A."/>
            <person name="Borchert S."/>
            <person name="Borriss R."/>
            <person name="Boursier L."/>
            <person name="Brans A."/>
            <person name="Braun M."/>
            <person name="Brignell S.C."/>
            <person name="Bron S."/>
            <person name="Brouillet S."/>
            <person name="Bruschi C.V."/>
            <person name="Caldwell B."/>
            <person name="Capuano V."/>
            <person name="Carter N.M."/>
            <person name="Choi S.-K."/>
            <person name="Codani J.-J."/>
            <person name="Connerton I.F."/>
            <person name="Cummings N.J."/>
            <person name="Daniel R.A."/>
            <person name="Denizot F."/>
            <person name="Devine K.M."/>
            <person name="Duesterhoeft A."/>
            <person name="Ehrlich S.D."/>
            <person name="Emmerson P.T."/>
            <person name="Entian K.-D."/>
            <person name="Errington J."/>
            <person name="Fabret C."/>
            <person name="Ferrari E."/>
            <person name="Foulger D."/>
            <person name="Fritz C."/>
            <person name="Fujita M."/>
            <person name="Fujita Y."/>
            <person name="Fuma S."/>
            <person name="Galizzi A."/>
            <person name="Galleron N."/>
            <person name="Ghim S.-Y."/>
            <person name="Glaser P."/>
            <person name="Goffeau A."/>
            <person name="Golightly E.J."/>
            <person name="Grandi G."/>
            <person name="Guiseppi G."/>
            <person name="Guy B.J."/>
            <person name="Haga K."/>
            <person name="Haiech J."/>
            <person name="Harwood C.R."/>
            <person name="Henaut A."/>
            <person name="Hilbert H."/>
            <person name="Holsappel S."/>
            <person name="Hosono S."/>
            <person name="Hullo M.-F."/>
            <person name="Itaya M."/>
            <person name="Jones L.-M."/>
            <person name="Joris B."/>
            <person name="Karamata D."/>
            <person name="Kasahara Y."/>
            <person name="Klaerr-Blanchard M."/>
            <person name="Klein C."/>
            <person name="Kobayashi Y."/>
            <person name="Koetter P."/>
            <person name="Koningstein G."/>
            <person name="Krogh S."/>
            <person name="Kumano M."/>
            <person name="Kurita K."/>
            <person name="Lapidus A."/>
            <person name="Lardinois S."/>
            <person name="Lauber J."/>
            <person name="Lazarevic V."/>
            <person name="Lee S.-M."/>
            <person name="Levine A."/>
            <person name="Liu H."/>
            <person name="Masuda S."/>
            <person name="Mauel C."/>
            <person name="Medigue C."/>
            <person name="Medina N."/>
            <person name="Mellado R.P."/>
            <person name="Mizuno M."/>
            <person name="Moestl D."/>
            <person name="Nakai S."/>
            <person name="Noback M."/>
            <person name="Noone D."/>
            <person name="O'Reilly M."/>
            <person name="Ogawa K."/>
            <person name="Ogiwara A."/>
            <person name="Oudega B."/>
            <person name="Park S.-H."/>
            <person name="Parro V."/>
            <person name="Pohl T.M."/>
            <person name="Portetelle D."/>
            <person name="Porwollik S."/>
            <person name="Prescott A.M."/>
            <person name="Presecan E."/>
            <person name="Pujic P."/>
            <person name="Purnelle B."/>
            <person name="Rapoport G."/>
            <person name="Rey M."/>
            <person name="Reynolds S."/>
            <person name="Rieger M."/>
            <person name="Rivolta C."/>
            <person name="Rocha E."/>
            <person name="Roche B."/>
            <person name="Rose M."/>
            <person name="Sadaie Y."/>
            <person name="Sato T."/>
            <person name="Scanlan E."/>
            <person name="Schleich S."/>
            <person name="Schroeter R."/>
            <person name="Scoffone F."/>
            <person name="Sekiguchi J."/>
            <person name="Sekowska A."/>
            <person name="Seror S.J."/>
            <person name="Serror P."/>
            <person name="Shin B.-S."/>
            <person name="Soldo B."/>
            <person name="Sorokin A."/>
            <person name="Tacconi E."/>
            <person name="Takagi T."/>
            <person name="Takahashi H."/>
            <person name="Takemaru K."/>
            <person name="Takeuchi M."/>
            <person name="Tamakoshi A."/>
            <person name="Tanaka T."/>
            <person name="Terpstra P."/>
            <person name="Tognoni A."/>
            <person name="Tosato V."/>
            <person name="Uchiyama S."/>
            <person name="Vandenbol M."/>
            <person name="Vannier F."/>
            <person name="Vassarotti A."/>
            <person name="Viari A."/>
            <person name="Wambutt R."/>
            <person name="Wedler E."/>
            <person name="Wedler H."/>
            <person name="Weitzenegger T."/>
            <person name="Winters P."/>
            <person name="Wipat A."/>
            <person name="Yamamoto H."/>
            <person name="Yamane K."/>
            <person name="Yasumoto K."/>
            <person name="Yata K."/>
            <person name="Yoshida K."/>
            <person name="Yoshikawa H.-F."/>
            <person name="Zumstein E."/>
            <person name="Yoshikawa H."/>
            <person name="Danchin A."/>
        </authorList>
    </citation>
    <scope>NUCLEOTIDE SEQUENCE [LARGE SCALE GENOMIC DNA]</scope>
    <source>
        <strain>168</strain>
    </source>
</reference>
<reference key="3">
    <citation type="journal article" date="1998" name="Mol. Microbiol.">
        <title>Bacillus subtilis contains multiple Fur homologues: identification of the iron uptake (Fur) and peroxide regulon (PerR) repressors.</title>
        <authorList>
            <person name="Bsat N."/>
            <person name="Herbig A."/>
            <person name="Casillas-Martinez L."/>
            <person name="Setlow P."/>
            <person name="Helmann J.D."/>
        </authorList>
    </citation>
    <scope>CHARACTERIZATION</scope>
</reference>
<reference key="4">
    <citation type="journal article" date="2002" name="Mol. Microbiol.">
        <title>Regulation of inducible peroxide stress responses.</title>
        <authorList>
            <person name="Mongkolsuk S."/>
            <person name="Helmann J.D."/>
        </authorList>
    </citation>
    <scope>MUTAGENESIS OF CYS-136 AND CYS-139</scope>
</reference>
<reference key="5">
    <citation type="journal article" date="2006" name="Mol. Microbiol.">
        <title>Crystal structure of the apo-PerR-Zn protein from Bacillus subtilis.</title>
        <authorList>
            <person name="Traore D.A."/>
            <person name="El Ghazouani A."/>
            <person name="Ilango S."/>
            <person name="Dupuy J."/>
            <person name="Jacquamet L."/>
            <person name="Ferrer J.-L."/>
            <person name="Caux-Thang C."/>
            <person name="Duarte V."/>
            <person name="Latour J.-M."/>
        </authorList>
    </citation>
    <scope>X-RAY CRYSTALLOGRAPHY (1.75 ANGSTROMS)</scope>
    <scope>SUBUNIT</scope>
    <scope>ZINC-BINDING SITES</scope>
</reference>
<comment type="function">
    <text>Hydrogen and organic peroxide sensor. Represses the expression of a regulon of peroxide-inducible genes such as katA, ahpC, ahpF, the heme biosynthesis operon (hemAXCDBL), fur, perR, zosA and mrgA.</text>
</comment>
<comment type="cofactor">
    <cofactor>
        <name>Mn(2+)</name>
        <dbReference type="ChEBI" id="CHEBI:29035"/>
    </cofactor>
    <cofactor>
        <name>Fe(2+)</name>
        <dbReference type="ChEBI" id="CHEBI:29033"/>
    </cofactor>
    <text>Binds 1 Mn(2+) or Fe(2+) ion per subunit.</text>
</comment>
<comment type="cofactor">
    <cofactor>
        <name>Zn(2+)</name>
        <dbReference type="ChEBI" id="CHEBI:29105"/>
    </cofactor>
    <text>Binds 1 zinc ion per subunit.</text>
</comment>
<comment type="subunit">
    <text evidence="3">Homodimer.</text>
</comment>
<comment type="subcellular location">
    <subcellularLocation>
        <location evidence="1">Cytoplasm</location>
    </subcellularLocation>
</comment>
<comment type="PTM">
    <text>Possibly oxidized on a cysteine residue; the Cys-SOH formed in response to oxidative signaling may rapidly react with a Cys-SH to form a disulfide bond, leading to the loss of metal ion and inactivation of repressor function. Oxidized PerR can be further reduced by thiol reductants and repressor activity restored.</text>
</comment>
<comment type="similarity">
    <text evidence="4">Belongs to the Fur family.</text>
</comment>
<proteinExistence type="evidence at protein level"/>
<organism>
    <name type="scientific">Bacillus subtilis (strain 168)</name>
    <dbReference type="NCBI Taxonomy" id="224308"/>
    <lineage>
        <taxon>Bacteria</taxon>
        <taxon>Bacillati</taxon>
        <taxon>Bacillota</taxon>
        <taxon>Bacilli</taxon>
        <taxon>Bacillales</taxon>
        <taxon>Bacillaceae</taxon>
        <taxon>Bacillus</taxon>
    </lineage>
</organism>
<evidence type="ECO:0000250" key="1"/>
<evidence type="ECO:0000269" key="2">
    <source>
    </source>
</evidence>
<evidence type="ECO:0000269" key="3">
    <source>
    </source>
</evidence>
<evidence type="ECO:0000305" key="4"/>
<evidence type="ECO:0007829" key="5">
    <source>
        <dbReference type="PDB" id="2FE3"/>
    </source>
</evidence>
<evidence type="ECO:0007829" key="6">
    <source>
        <dbReference type="PDB" id="3F8N"/>
    </source>
</evidence>
<sequence>MAAHELKEALETLKETGVRITPQRHAILEYLVNSMAHPTADDIYKALEGKFPNMSVATVYNNLRVFRESGLVKELTYGDASSRFDFVTSDHYHAICENCGKIVDFHYPGLDEVEQLAAHVTGFKVSHHRLEIYGVCQECSKKENH</sequence>
<dbReference type="EMBL" id="Z82044">
    <property type="protein sequence ID" value="CAB04800.1"/>
    <property type="molecule type" value="Genomic_DNA"/>
</dbReference>
<dbReference type="EMBL" id="AL009126">
    <property type="protein sequence ID" value="CAB12701.1"/>
    <property type="molecule type" value="Genomic_DNA"/>
</dbReference>
<dbReference type="PIR" id="B69816">
    <property type="entry name" value="B69816"/>
</dbReference>
<dbReference type="RefSeq" id="NP_388753.1">
    <property type="nucleotide sequence ID" value="NC_000964.3"/>
</dbReference>
<dbReference type="RefSeq" id="WP_003223285.1">
    <property type="nucleotide sequence ID" value="NZ_OZ025638.1"/>
</dbReference>
<dbReference type="PDB" id="2FE3">
    <property type="method" value="X-ray"/>
    <property type="resolution" value="1.75 A"/>
    <property type="chains" value="A/B=1-145"/>
</dbReference>
<dbReference type="PDB" id="2RGV">
    <property type="method" value="X-ray"/>
    <property type="resolution" value="2.05 A"/>
    <property type="chains" value="A/B=1-145"/>
</dbReference>
<dbReference type="PDB" id="3F8N">
    <property type="method" value="X-ray"/>
    <property type="resolution" value="3.15 A"/>
    <property type="chains" value="A/B=1-145"/>
</dbReference>
<dbReference type="PDBsum" id="2FE3"/>
<dbReference type="PDBsum" id="2RGV"/>
<dbReference type="PDBsum" id="3F8N"/>
<dbReference type="SMR" id="P71086"/>
<dbReference type="FunCoup" id="P71086">
    <property type="interactions" value="360"/>
</dbReference>
<dbReference type="STRING" id="224308.BSU08730"/>
<dbReference type="PaxDb" id="224308-BSU08730"/>
<dbReference type="EnsemblBacteria" id="CAB12701">
    <property type="protein sequence ID" value="CAB12701"/>
    <property type="gene ID" value="BSU_08730"/>
</dbReference>
<dbReference type="GeneID" id="86874674"/>
<dbReference type="GeneID" id="939227"/>
<dbReference type="KEGG" id="bsu:BSU08730"/>
<dbReference type="PATRIC" id="fig|224308.179.peg.941"/>
<dbReference type="eggNOG" id="COG0735">
    <property type="taxonomic scope" value="Bacteria"/>
</dbReference>
<dbReference type="InParanoid" id="P71086"/>
<dbReference type="OrthoDB" id="8659436at2"/>
<dbReference type="PhylomeDB" id="P71086"/>
<dbReference type="BioCyc" id="BSUB:BSU08730-MONOMER"/>
<dbReference type="EvolutionaryTrace" id="P71086"/>
<dbReference type="PRO" id="PR:P71086"/>
<dbReference type="Proteomes" id="UP000001570">
    <property type="component" value="Chromosome"/>
</dbReference>
<dbReference type="CollecTF" id="EXPREG_00000bc0"/>
<dbReference type="GO" id="GO:0005737">
    <property type="term" value="C:cytoplasm"/>
    <property type="evidence" value="ECO:0007669"/>
    <property type="project" value="UniProtKB-SubCell"/>
</dbReference>
<dbReference type="GO" id="GO:0032993">
    <property type="term" value="C:protein-DNA complex"/>
    <property type="evidence" value="ECO:0000315"/>
    <property type="project" value="CollecTF"/>
</dbReference>
<dbReference type="GO" id="GO:0001216">
    <property type="term" value="F:DNA-binding transcription activator activity"/>
    <property type="evidence" value="ECO:0000315"/>
    <property type="project" value="CollecTF"/>
</dbReference>
<dbReference type="GO" id="GO:0003700">
    <property type="term" value="F:DNA-binding transcription factor activity"/>
    <property type="evidence" value="ECO:0000318"/>
    <property type="project" value="GO_Central"/>
</dbReference>
<dbReference type="GO" id="GO:0001217">
    <property type="term" value="F:DNA-binding transcription repressor activity"/>
    <property type="evidence" value="ECO:0000315"/>
    <property type="project" value="CollecTF"/>
</dbReference>
<dbReference type="GO" id="GO:0000976">
    <property type="term" value="F:transcription cis-regulatory region binding"/>
    <property type="evidence" value="ECO:0000315"/>
    <property type="project" value="CollecTF"/>
</dbReference>
<dbReference type="GO" id="GO:0008270">
    <property type="term" value="F:zinc ion binding"/>
    <property type="evidence" value="ECO:0000318"/>
    <property type="project" value="GO_Central"/>
</dbReference>
<dbReference type="GO" id="GO:0045892">
    <property type="term" value="P:negative regulation of DNA-templated transcription"/>
    <property type="evidence" value="ECO:0000318"/>
    <property type="project" value="GO_Central"/>
</dbReference>
<dbReference type="GO" id="GO:1900376">
    <property type="term" value="P:regulation of secondary metabolite biosynthetic process"/>
    <property type="evidence" value="ECO:0000318"/>
    <property type="project" value="GO_Central"/>
</dbReference>
<dbReference type="CDD" id="cd07153">
    <property type="entry name" value="Fur_like"/>
    <property type="match status" value="1"/>
</dbReference>
<dbReference type="FunFam" id="1.10.10.10:FF:000147">
    <property type="entry name" value="Fur family transcriptional regulator"/>
    <property type="match status" value="1"/>
</dbReference>
<dbReference type="FunFam" id="3.30.1490.190:FF:000003">
    <property type="entry name" value="Fur family transcriptional regulator"/>
    <property type="match status" value="1"/>
</dbReference>
<dbReference type="Gene3D" id="3.30.1490.190">
    <property type="match status" value="1"/>
</dbReference>
<dbReference type="Gene3D" id="1.10.10.10">
    <property type="entry name" value="Winged helix-like DNA-binding domain superfamily/Winged helix DNA-binding domain"/>
    <property type="match status" value="1"/>
</dbReference>
<dbReference type="InterPro" id="IPR002481">
    <property type="entry name" value="FUR"/>
</dbReference>
<dbReference type="InterPro" id="IPR043135">
    <property type="entry name" value="Fur_C"/>
</dbReference>
<dbReference type="InterPro" id="IPR036388">
    <property type="entry name" value="WH-like_DNA-bd_sf"/>
</dbReference>
<dbReference type="InterPro" id="IPR036390">
    <property type="entry name" value="WH_DNA-bd_sf"/>
</dbReference>
<dbReference type="PANTHER" id="PTHR33202:SF8">
    <property type="entry name" value="PEROXIDE-RESPONSIVE REPRESSOR PERR"/>
    <property type="match status" value="1"/>
</dbReference>
<dbReference type="PANTHER" id="PTHR33202">
    <property type="entry name" value="ZINC UPTAKE REGULATION PROTEIN"/>
    <property type="match status" value="1"/>
</dbReference>
<dbReference type="Pfam" id="PF01475">
    <property type="entry name" value="FUR"/>
    <property type="match status" value="1"/>
</dbReference>
<dbReference type="SUPFAM" id="SSF46785">
    <property type="entry name" value="Winged helix' DNA-binding domain"/>
    <property type="match status" value="1"/>
</dbReference>
<name>PERR_BACSU</name>
<keyword id="KW-0002">3D-structure</keyword>
<keyword id="KW-0963">Cytoplasm</keyword>
<keyword id="KW-1015">Disulfide bond</keyword>
<keyword id="KW-0238">DNA-binding</keyword>
<keyword id="KW-0464">Manganese</keyword>
<keyword id="KW-0479">Metal-binding</keyword>
<keyword id="KW-0558">Oxidation</keyword>
<keyword id="KW-1185">Reference proteome</keyword>
<keyword id="KW-0678">Repressor</keyword>
<keyword id="KW-0804">Transcription</keyword>
<keyword id="KW-0805">Transcription regulation</keyword>
<keyword id="KW-0862">Zinc</keyword>
<feature type="chain" id="PRO_0000095590" description="Peroxide operon regulator">
    <location>
        <begin position="1"/>
        <end position="145"/>
    </location>
</feature>
<feature type="region of interest" description="DNA-binding">
    <location>
        <begin position="1"/>
        <end position="78"/>
    </location>
</feature>
<feature type="binding site">
    <location>
        <position position="96"/>
    </location>
    <ligand>
        <name>Zn(2+)</name>
        <dbReference type="ChEBI" id="CHEBI:29105"/>
    </ligand>
</feature>
<feature type="binding site">
    <location>
        <position position="99"/>
    </location>
    <ligand>
        <name>Zn(2+)</name>
        <dbReference type="ChEBI" id="CHEBI:29105"/>
    </ligand>
</feature>
<feature type="binding site">
    <location>
        <position position="136"/>
    </location>
    <ligand>
        <name>Zn(2+)</name>
        <dbReference type="ChEBI" id="CHEBI:29105"/>
    </ligand>
</feature>
<feature type="binding site">
    <location>
        <position position="139"/>
    </location>
    <ligand>
        <name>Zn(2+)</name>
        <dbReference type="ChEBI" id="CHEBI:29105"/>
    </ligand>
</feature>
<feature type="mutagenesis site" description="No repressor activity." evidence="2">
    <original>C</original>
    <variation>S</variation>
    <location>
        <position position="136"/>
    </location>
</feature>
<feature type="mutagenesis site" description="Full repressor activity, but no modulation by peroxide." evidence="2">
    <original>C</original>
    <variation>D</variation>
    <location>
        <position position="139"/>
    </location>
</feature>
<feature type="mutagenesis site" description="Full repressor activity, but no modulation by peroxide." evidence="2">
    <original>C</original>
    <variation>H</variation>
    <location>
        <position position="139"/>
    </location>
</feature>
<feature type="mutagenesis site" description="No repressor activity." evidence="2">
    <original>C</original>
    <variation>S</variation>
    <location>
        <position position="139"/>
    </location>
</feature>
<feature type="helix" evidence="5">
    <location>
        <begin position="5"/>
        <end position="15"/>
    </location>
</feature>
<feature type="helix" evidence="5">
    <location>
        <begin position="22"/>
        <end position="33"/>
    </location>
</feature>
<feature type="helix" evidence="5">
    <location>
        <begin position="40"/>
        <end position="47"/>
    </location>
</feature>
<feature type="helix" evidence="5">
    <location>
        <begin position="48"/>
        <end position="50"/>
    </location>
</feature>
<feature type="helix" evidence="5">
    <location>
        <begin position="56"/>
        <end position="68"/>
    </location>
</feature>
<feature type="strand" evidence="5">
    <location>
        <begin position="71"/>
        <end position="75"/>
    </location>
</feature>
<feature type="strand" evidence="6">
    <location>
        <begin position="78"/>
        <end position="80"/>
    </location>
</feature>
<feature type="strand" evidence="5">
    <location>
        <begin position="83"/>
        <end position="86"/>
    </location>
</feature>
<feature type="strand" evidence="5">
    <location>
        <begin position="91"/>
        <end position="96"/>
    </location>
</feature>
<feature type="turn" evidence="5">
    <location>
        <begin position="97"/>
        <end position="99"/>
    </location>
</feature>
<feature type="strand" evidence="5">
    <location>
        <begin position="102"/>
        <end position="104"/>
    </location>
</feature>
<feature type="helix" evidence="5">
    <location>
        <begin position="111"/>
        <end position="121"/>
    </location>
</feature>
<feature type="strand" evidence="5">
    <location>
        <begin position="124"/>
        <end position="135"/>
    </location>
</feature>
<feature type="helix" evidence="5">
    <location>
        <begin position="137"/>
        <end position="143"/>
    </location>
</feature>
<accession>P71086</accession>
<gene>
    <name type="primary">perR</name>
    <name type="synonym">ygaG</name>
    <name type="ordered locus">BSU08730</name>
</gene>